<keyword id="KW-0968">Cytoplasmic vesicle</keyword>
<keyword id="KW-0472">Membrane</keyword>
<keyword id="KW-0653">Protein transport</keyword>
<keyword id="KW-1185">Reference proteome</keyword>
<keyword id="KW-0677">Repeat</keyword>
<keyword id="KW-0813">Transport</keyword>
<keyword id="KW-0926">Vacuole</keyword>
<keyword id="KW-0853">WD repeat</keyword>
<organism>
    <name type="scientific">Emericella nidulans (strain FGSC A4 / ATCC 38163 / CBS 112.46 / NRRL 194 / M139)</name>
    <name type="common">Aspergillus nidulans</name>
    <dbReference type="NCBI Taxonomy" id="227321"/>
    <lineage>
        <taxon>Eukaryota</taxon>
        <taxon>Fungi</taxon>
        <taxon>Dikarya</taxon>
        <taxon>Ascomycota</taxon>
        <taxon>Pezizomycotina</taxon>
        <taxon>Eurotiomycetes</taxon>
        <taxon>Eurotiomycetidae</taxon>
        <taxon>Eurotiales</taxon>
        <taxon>Aspergillaceae</taxon>
        <taxon>Aspergillus</taxon>
        <taxon>Aspergillus subgen. Nidulantes</taxon>
    </lineage>
</organism>
<reference key="1">
    <citation type="journal article" date="2005" name="Nature">
        <title>Sequencing of Aspergillus nidulans and comparative analysis with A. fumigatus and A. oryzae.</title>
        <authorList>
            <person name="Galagan J.E."/>
            <person name="Calvo S.E."/>
            <person name="Cuomo C."/>
            <person name="Ma L.-J."/>
            <person name="Wortman J.R."/>
            <person name="Batzoglou S."/>
            <person name="Lee S.-I."/>
            <person name="Bastuerkmen M."/>
            <person name="Spevak C.C."/>
            <person name="Clutterbuck J."/>
            <person name="Kapitonov V."/>
            <person name="Jurka J."/>
            <person name="Scazzocchio C."/>
            <person name="Farman M.L."/>
            <person name="Butler J."/>
            <person name="Purcell S."/>
            <person name="Harris S."/>
            <person name="Braus G.H."/>
            <person name="Draht O."/>
            <person name="Busch S."/>
            <person name="D'Enfert C."/>
            <person name="Bouchier C."/>
            <person name="Goldman G.H."/>
            <person name="Bell-Pedersen D."/>
            <person name="Griffiths-Jones S."/>
            <person name="Doonan J.H."/>
            <person name="Yu J."/>
            <person name="Vienken K."/>
            <person name="Pain A."/>
            <person name="Freitag M."/>
            <person name="Selker E.U."/>
            <person name="Archer D.B."/>
            <person name="Penalva M.A."/>
            <person name="Oakley B.R."/>
            <person name="Momany M."/>
            <person name="Tanaka T."/>
            <person name="Kumagai T."/>
            <person name="Asai K."/>
            <person name="Machida M."/>
            <person name="Nierman W.C."/>
            <person name="Denning D.W."/>
            <person name="Caddick M.X."/>
            <person name="Hynes M."/>
            <person name="Paoletti M."/>
            <person name="Fischer R."/>
            <person name="Miller B.L."/>
            <person name="Dyer P.S."/>
            <person name="Sachs M.S."/>
            <person name="Osmani S.A."/>
            <person name="Birren B.W."/>
        </authorList>
    </citation>
    <scope>NUCLEOTIDE SEQUENCE [LARGE SCALE GENOMIC DNA]</scope>
    <source>
        <strain>FGSC A4 / ATCC 38163 / CBS 112.46 / NRRL 194 / M139</strain>
    </source>
</reference>
<reference key="2">
    <citation type="journal article" date="2009" name="Fungal Genet. Biol.">
        <title>The 2008 update of the Aspergillus nidulans genome annotation: a community effort.</title>
        <authorList>
            <person name="Wortman J.R."/>
            <person name="Gilsenan J.M."/>
            <person name="Joardar V."/>
            <person name="Deegan J."/>
            <person name="Clutterbuck J."/>
            <person name="Andersen M.R."/>
            <person name="Archer D."/>
            <person name="Bencina M."/>
            <person name="Braus G."/>
            <person name="Coutinho P."/>
            <person name="von Dohren H."/>
            <person name="Doonan J."/>
            <person name="Driessen A.J."/>
            <person name="Durek P."/>
            <person name="Espeso E."/>
            <person name="Fekete E."/>
            <person name="Flipphi M."/>
            <person name="Estrada C.G."/>
            <person name="Geysens S."/>
            <person name="Goldman G."/>
            <person name="de Groot P.W."/>
            <person name="Hansen K."/>
            <person name="Harris S.D."/>
            <person name="Heinekamp T."/>
            <person name="Helmstaedt K."/>
            <person name="Henrissat B."/>
            <person name="Hofmann G."/>
            <person name="Homan T."/>
            <person name="Horio T."/>
            <person name="Horiuchi H."/>
            <person name="James S."/>
            <person name="Jones M."/>
            <person name="Karaffa L."/>
            <person name="Karanyi Z."/>
            <person name="Kato M."/>
            <person name="Keller N."/>
            <person name="Kelly D.E."/>
            <person name="Kiel J.A."/>
            <person name="Kim J.M."/>
            <person name="van der Klei I.J."/>
            <person name="Klis F.M."/>
            <person name="Kovalchuk A."/>
            <person name="Krasevec N."/>
            <person name="Kubicek C.P."/>
            <person name="Liu B."/>
            <person name="Maccabe A."/>
            <person name="Meyer V."/>
            <person name="Mirabito P."/>
            <person name="Miskei M."/>
            <person name="Mos M."/>
            <person name="Mullins J."/>
            <person name="Nelson D.R."/>
            <person name="Nielsen J."/>
            <person name="Oakley B.R."/>
            <person name="Osmani S.A."/>
            <person name="Pakula T."/>
            <person name="Paszewski A."/>
            <person name="Paulsen I."/>
            <person name="Pilsyk S."/>
            <person name="Pocsi I."/>
            <person name="Punt P.J."/>
            <person name="Ram A.F."/>
            <person name="Ren Q."/>
            <person name="Robellet X."/>
            <person name="Robson G."/>
            <person name="Seiboth B."/>
            <person name="van Solingen P."/>
            <person name="Specht T."/>
            <person name="Sun J."/>
            <person name="Taheri-Talesh N."/>
            <person name="Takeshita N."/>
            <person name="Ussery D."/>
            <person name="vanKuyk P.A."/>
            <person name="Visser H."/>
            <person name="van de Vondervoort P.J."/>
            <person name="de Vries R.P."/>
            <person name="Walton J."/>
            <person name="Xiang X."/>
            <person name="Xiong Y."/>
            <person name="Zeng A.P."/>
            <person name="Brandt B.W."/>
            <person name="Cornell M.J."/>
            <person name="van den Hondel C.A."/>
            <person name="Visser J."/>
            <person name="Oliver S.G."/>
            <person name="Turner G."/>
        </authorList>
    </citation>
    <scope>GENOME REANNOTATION</scope>
    <source>
        <strain>FGSC A4 / ATCC 38163 / CBS 112.46 / NRRL 194 / M139</strain>
    </source>
</reference>
<comment type="function">
    <text evidence="1">Involved in mitochondrial or peroxisomal functions and amino acid signaling pathways.</text>
</comment>
<comment type="subcellular location">
    <subcellularLocation>
        <location evidence="1">Vacuole membrane</location>
        <topology evidence="1">Peripheral membrane protein</topology>
    </subcellularLocation>
    <subcellularLocation>
        <location evidence="1">Cytoplasmic vesicle membrane</location>
        <topology evidence="1">Peripheral membrane protein</topology>
    </subcellularLocation>
    <text evidence="1">Vesicular and vacuolar.</text>
</comment>
<comment type="domain">
    <text evidence="1">May contain a beta-propeller domain involved in specific binding to phosphatidylinositol 3,5-bisphosphate (PIP2), leading to the association of the protein to the membrane.</text>
</comment>
<comment type="similarity">
    <text evidence="2">Belongs to the WD repeat PROPPIN family.</text>
</comment>
<proteinExistence type="inferred from homology"/>
<name>HSV2_EMENI</name>
<accession>Q5B464</accession>
<accession>C8VB13</accession>
<sequence length="317" mass="34192">MLGQSNYLALVGGGRQPKFPQNKLVIWDDAKQKVVITLEFRTSVLGVRLSKSRIVVALLNSIHTFVFSSPPKKLAVFETTDNPLGLACLGQKVLAFPGRSPGQVQLVELETGNVSIIPAHSTPLRAMALSPDGEVLATASEAGTLVRIFATSNCAKMAELRRGVDHAIIFSLAISPSNNLLAVTSDKSTLHVFNLPHPRNAPYSNQQASSSDDGVNKKWGILGKIPLLPRVFSDVYSFASAHFELGEEEPGPTYAPPLGTVLGRPPKGVIGWSNDNTILVVGSGSDGRWEKFVLRDDEEGKKHCIREGWKKYLGSGS</sequence>
<evidence type="ECO:0000250" key="1"/>
<evidence type="ECO:0000305" key="2"/>
<gene>
    <name type="primary">hsv2</name>
    <name type="ORF">AN4666</name>
</gene>
<feature type="chain" id="PRO_0000051028" description="SVP1-like protein 2">
    <location>
        <begin position="1"/>
        <end position="317"/>
    </location>
</feature>
<feature type="repeat" description="WD 1">
    <location>
        <begin position="119"/>
        <end position="159"/>
    </location>
</feature>
<feature type="repeat" description="WD 2">
    <location>
        <begin position="164"/>
        <end position="203"/>
    </location>
</feature>
<dbReference type="EMBL" id="AACD01000080">
    <property type="protein sequence ID" value="EAA60708.1"/>
    <property type="molecule type" value="Genomic_DNA"/>
</dbReference>
<dbReference type="EMBL" id="BN001303">
    <property type="protein sequence ID" value="CBF77040.1"/>
    <property type="molecule type" value="Genomic_DNA"/>
</dbReference>
<dbReference type="RefSeq" id="XP_662270.1">
    <property type="nucleotide sequence ID" value="XM_657178.1"/>
</dbReference>
<dbReference type="SMR" id="Q5B464"/>
<dbReference type="FunCoup" id="Q5B464">
    <property type="interactions" value="374"/>
</dbReference>
<dbReference type="STRING" id="227321.Q5B464"/>
<dbReference type="EnsemblFungi" id="CBF77040">
    <property type="protein sequence ID" value="CBF77040"/>
    <property type="gene ID" value="ANIA_04666"/>
</dbReference>
<dbReference type="KEGG" id="ani:ANIA_04666"/>
<dbReference type="eggNOG" id="KOG2111">
    <property type="taxonomic scope" value="Eukaryota"/>
</dbReference>
<dbReference type="HOGENOM" id="CLU_025895_0_0_1"/>
<dbReference type="InParanoid" id="Q5B464"/>
<dbReference type="OMA" id="GGPQCMC"/>
<dbReference type="OrthoDB" id="1667587at2759"/>
<dbReference type="Proteomes" id="UP000000560">
    <property type="component" value="Chromosome III"/>
</dbReference>
<dbReference type="GO" id="GO:0030659">
    <property type="term" value="C:cytoplasmic vesicle membrane"/>
    <property type="evidence" value="ECO:0007669"/>
    <property type="project" value="UniProtKB-SubCell"/>
</dbReference>
<dbReference type="GO" id="GO:0005829">
    <property type="term" value="C:cytosol"/>
    <property type="evidence" value="ECO:0000318"/>
    <property type="project" value="GO_Central"/>
</dbReference>
<dbReference type="GO" id="GO:0034045">
    <property type="term" value="C:phagophore assembly site membrane"/>
    <property type="evidence" value="ECO:0000318"/>
    <property type="project" value="GO_Central"/>
</dbReference>
<dbReference type="GO" id="GO:0005774">
    <property type="term" value="C:vacuolar membrane"/>
    <property type="evidence" value="ECO:0007669"/>
    <property type="project" value="UniProtKB-SubCell"/>
</dbReference>
<dbReference type="GO" id="GO:0080025">
    <property type="term" value="F:phosphatidylinositol-3,5-bisphosphate binding"/>
    <property type="evidence" value="ECO:0000318"/>
    <property type="project" value="GO_Central"/>
</dbReference>
<dbReference type="GO" id="GO:0032266">
    <property type="term" value="F:phosphatidylinositol-3-phosphate binding"/>
    <property type="evidence" value="ECO:0000318"/>
    <property type="project" value="GO_Central"/>
</dbReference>
<dbReference type="GO" id="GO:0030674">
    <property type="term" value="F:protein-macromolecule adaptor activity"/>
    <property type="evidence" value="ECO:0000318"/>
    <property type="project" value="GO_Central"/>
</dbReference>
<dbReference type="GO" id="GO:0000422">
    <property type="term" value="P:autophagy of mitochondrion"/>
    <property type="evidence" value="ECO:0000318"/>
    <property type="project" value="GO_Central"/>
</dbReference>
<dbReference type="GO" id="GO:0061723">
    <property type="term" value="P:glycophagy"/>
    <property type="evidence" value="ECO:0000318"/>
    <property type="project" value="GO_Central"/>
</dbReference>
<dbReference type="GO" id="GO:0044804">
    <property type="term" value="P:nucleophagy"/>
    <property type="evidence" value="ECO:0000318"/>
    <property type="project" value="GO_Central"/>
</dbReference>
<dbReference type="GO" id="GO:0000425">
    <property type="term" value="P:pexophagy"/>
    <property type="evidence" value="ECO:0000318"/>
    <property type="project" value="GO_Central"/>
</dbReference>
<dbReference type="GO" id="GO:0034497">
    <property type="term" value="P:protein localization to phagophore assembly site"/>
    <property type="evidence" value="ECO:0000318"/>
    <property type="project" value="GO_Central"/>
</dbReference>
<dbReference type="GO" id="GO:0015031">
    <property type="term" value="P:protein transport"/>
    <property type="evidence" value="ECO:0007669"/>
    <property type="project" value="UniProtKB-KW"/>
</dbReference>
<dbReference type="FunFam" id="2.130.10.10:FF:001084">
    <property type="entry name" value="Phosphatidylinositol 3,5-bisphosphate-binding protein"/>
    <property type="match status" value="1"/>
</dbReference>
<dbReference type="Gene3D" id="2.130.10.10">
    <property type="entry name" value="YVTN repeat-like/Quinoprotein amine dehydrogenase"/>
    <property type="match status" value="1"/>
</dbReference>
<dbReference type="InterPro" id="IPR048720">
    <property type="entry name" value="PROPPIN"/>
</dbReference>
<dbReference type="InterPro" id="IPR015943">
    <property type="entry name" value="WD40/YVTN_repeat-like_dom_sf"/>
</dbReference>
<dbReference type="InterPro" id="IPR036322">
    <property type="entry name" value="WD40_repeat_dom_sf"/>
</dbReference>
<dbReference type="InterPro" id="IPR001680">
    <property type="entry name" value="WD40_rpt"/>
</dbReference>
<dbReference type="PANTHER" id="PTHR11227">
    <property type="entry name" value="WD-REPEAT PROTEIN INTERACTING WITH PHOSPHOINOSIDES WIPI -RELATED"/>
    <property type="match status" value="1"/>
</dbReference>
<dbReference type="Pfam" id="PF21032">
    <property type="entry name" value="PROPPIN"/>
    <property type="match status" value="1"/>
</dbReference>
<dbReference type="SMART" id="SM00320">
    <property type="entry name" value="WD40"/>
    <property type="match status" value="2"/>
</dbReference>
<dbReference type="SUPFAM" id="SSF50978">
    <property type="entry name" value="WD40 repeat-like"/>
    <property type="match status" value="1"/>
</dbReference>
<protein>
    <recommendedName>
        <fullName>SVP1-like protein 2</fullName>
    </recommendedName>
</protein>